<comment type="caution">
    <text evidence="2">Could be the product of a pseudogene. The N-terminus is about 750 residues shorter than orthologs, and it contains a truncated response regulatory domain.</text>
</comment>
<feature type="chain" id="PRO_0000388337" description="Putative uncharacterized protein YwpD">
    <location>
        <begin position="1"/>
        <end position="278"/>
    </location>
</feature>
<feature type="domain" description="Response regulatory" evidence="1">
    <location>
        <begin position="1"/>
        <end position="55"/>
    </location>
</feature>
<protein>
    <recommendedName>
        <fullName>Putative uncharacterized protein YwpD</fullName>
    </recommendedName>
</protein>
<proteinExistence type="uncertain"/>
<sequence length="278" mass="31773">MKIRERFSMVDLPVLIITAAIIGHDKYKAFHAGANDILQKPYHYSEFMARIQNLIMMKHTANQATRMEMAFLQSQIKPHFLYNVLNTIISLTHLDIEKAREVTEEFTNYLRMSFDFQNTSAISSFRHELSIINSYLSIEKTRFSNRLEVLFDIDEDIDFILPPLMIQPLVENAVLHGVSKKRGGGWIKLTAKKQSKNEYHIKVEDNGPGITPEKQIDLLSTDFDRSVGLKNINQRLKHFCGSELMISSTPDAGTSVSMLIHLAETTGSPKELKDTERT</sequence>
<accession>P94586</accession>
<accession>Q795A7</accession>
<evidence type="ECO:0000255" key="1">
    <source>
        <dbReference type="PROSITE-ProRule" id="PRU00169"/>
    </source>
</evidence>
<evidence type="ECO:0000305" key="2"/>
<reference key="1">
    <citation type="journal article" date="1997" name="Microbiology">
        <title>The Bacillus subtilis genome from gerBC (311 degrees) to licR (334 degrees).</title>
        <authorList>
            <person name="Presecan E."/>
            <person name="Moszer I."/>
            <person name="Boursier L."/>
            <person name="Cruz Ramos H."/>
            <person name="De La Fuente V."/>
            <person name="Hullo M.-F."/>
            <person name="Lelong C."/>
            <person name="Schleich S."/>
            <person name="Sekowska A."/>
            <person name="Song B.H."/>
            <person name="Villani G."/>
            <person name="Kunst F."/>
            <person name="Danchin A."/>
            <person name="Glaser P."/>
        </authorList>
    </citation>
    <scope>NUCLEOTIDE SEQUENCE [GENOMIC DNA]</scope>
    <source>
        <strain>168</strain>
    </source>
</reference>
<reference key="2">
    <citation type="journal article" date="1997" name="Nature">
        <title>The complete genome sequence of the Gram-positive bacterium Bacillus subtilis.</title>
        <authorList>
            <person name="Kunst F."/>
            <person name="Ogasawara N."/>
            <person name="Moszer I."/>
            <person name="Albertini A.M."/>
            <person name="Alloni G."/>
            <person name="Azevedo V."/>
            <person name="Bertero M.G."/>
            <person name="Bessieres P."/>
            <person name="Bolotin A."/>
            <person name="Borchert S."/>
            <person name="Borriss R."/>
            <person name="Boursier L."/>
            <person name="Brans A."/>
            <person name="Braun M."/>
            <person name="Brignell S.C."/>
            <person name="Bron S."/>
            <person name="Brouillet S."/>
            <person name="Bruschi C.V."/>
            <person name="Caldwell B."/>
            <person name="Capuano V."/>
            <person name="Carter N.M."/>
            <person name="Choi S.-K."/>
            <person name="Codani J.-J."/>
            <person name="Connerton I.F."/>
            <person name="Cummings N.J."/>
            <person name="Daniel R.A."/>
            <person name="Denizot F."/>
            <person name="Devine K.M."/>
            <person name="Duesterhoeft A."/>
            <person name="Ehrlich S.D."/>
            <person name="Emmerson P.T."/>
            <person name="Entian K.-D."/>
            <person name="Errington J."/>
            <person name="Fabret C."/>
            <person name="Ferrari E."/>
            <person name="Foulger D."/>
            <person name="Fritz C."/>
            <person name="Fujita M."/>
            <person name="Fujita Y."/>
            <person name="Fuma S."/>
            <person name="Galizzi A."/>
            <person name="Galleron N."/>
            <person name="Ghim S.-Y."/>
            <person name="Glaser P."/>
            <person name="Goffeau A."/>
            <person name="Golightly E.J."/>
            <person name="Grandi G."/>
            <person name="Guiseppi G."/>
            <person name="Guy B.J."/>
            <person name="Haga K."/>
            <person name="Haiech J."/>
            <person name="Harwood C.R."/>
            <person name="Henaut A."/>
            <person name="Hilbert H."/>
            <person name="Holsappel S."/>
            <person name="Hosono S."/>
            <person name="Hullo M.-F."/>
            <person name="Itaya M."/>
            <person name="Jones L.-M."/>
            <person name="Joris B."/>
            <person name="Karamata D."/>
            <person name="Kasahara Y."/>
            <person name="Klaerr-Blanchard M."/>
            <person name="Klein C."/>
            <person name="Kobayashi Y."/>
            <person name="Koetter P."/>
            <person name="Koningstein G."/>
            <person name="Krogh S."/>
            <person name="Kumano M."/>
            <person name="Kurita K."/>
            <person name="Lapidus A."/>
            <person name="Lardinois S."/>
            <person name="Lauber J."/>
            <person name="Lazarevic V."/>
            <person name="Lee S.-M."/>
            <person name="Levine A."/>
            <person name="Liu H."/>
            <person name="Masuda S."/>
            <person name="Mauel C."/>
            <person name="Medigue C."/>
            <person name="Medina N."/>
            <person name="Mellado R.P."/>
            <person name="Mizuno M."/>
            <person name="Moestl D."/>
            <person name="Nakai S."/>
            <person name="Noback M."/>
            <person name="Noone D."/>
            <person name="O'Reilly M."/>
            <person name="Ogawa K."/>
            <person name="Ogiwara A."/>
            <person name="Oudega B."/>
            <person name="Park S.-H."/>
            <person name="Parro V."/>
            <person name="Pohl T.M."/>
            <person name="Portetelle D."/>
            <person name="Porwollik S."/>
            <person name="Prescott A.M."/>
            <person name="Presecan E."/>
            <person name="Pujic P."/>
            <person name="Purnelle B."/>
            <person name="Rapoport G."/>
            <person name="Rey M."/>
            <person name="Reynolds S."/>
            <person name="Rieger M."/>
            <person name="Rivolta C."/>
            <person name="Rocha E."/>
            <person name="Roche B."/>
            <person name="Rose M."/>
            <person name="Sadaie Y."/>
            <person name="Sato T."/>
            <person name="Scanlan E."/>
            <person name="Schleich S."/>
            <person name="Schroeter R."/>
            <person name="Scoffone F."/>
            <person name="Sekiguchi J."/>
            <person name="Sekowska A."/>
            <person name="Seror S.J."/>
            <person name="Serror P."/>
            <person name="Shin B.-S."/>
            <person name="Soldo B."/>
            <person name="Sorokin A."/>
            <person name="Tacconi E."/>
            <person name="Takagi T."/>
            <person name="Takahashi H."/>
            <person name="Takemaru K."/>
            <person name="Takeuchi M."/>
            <person name="Tamakoshi A."/>
            <person name="Tanaka T."/>
            <person name="Terpstra P."/>
            <person name="Tognoni A."/>
            <person name="Tosato V."/>
            <person name="Uchiyama S."/>
            <person name="Vandenbol M."/>
            <person name="Vannier F."/>
            <person name="Vassarotti A."/>
            <person name="Viari A."/>
            <person name="Wambutt R."/>
            <person name="Wedler E."/>
            <person name="Wedler H."/>
            <person name="Weitzenegger T."/>
            <person name="Winters P."/>
            <person name="Wipat A."/>
            <person name="Yamamoto H."/>
            <person name="Yamane K."/>
            <person name="Yasumoto K."/>
            <person name="Yata K."/>
            <person name="Yoshida K."/>
            <person name="Yoshikawa H.-F."/>
            <person name="Zumstein E."/>
            <person name="Yoshikawa H."/>
            <person name="Danchin A."/>
        </authorList>
    </citation>
    <scope>NUCLEOTIDE SEQUENCE [LARGE SCALE GENOMIC DNA]</scope>
    <source>
        <strain>168</strain>
    </source>
</reference>
<reference key="3">
    <citation type="journal article" date="2006" name="J. Bacteriol.">
        <title>Structural classification of bacterial response regulators: diversity of output domains and domain combinations.</title>
        <authorList>
            <person name="Galperin M.Y."/>
        </authorList>
    </citation>
    <scope>DISCUSSION OF SEQUENCE</scope>
</reference>
<name>YWPD_BACSU</name>
<keyword id="KW-1185">Reference proteome</keyword>
<organism>
    <name type="scientific">Bacillus subtilis (strain 168)</name>
    <dbReference type="NCBI Taxonomy" id="224308"/>
    <lineage>
        <taxon>Bacteria</taxon>
        <taxon>Bacillati</taxon>
        <taxon>Bacillota</taxon>
        <taxon>Bacilli</taxon>
        <taxon>Bacillales</taxon>
        <taxon>Bacillaceae</taxon>
        <taxon>Bacillus</taxon>
    </lineage>
</organism>
<dbReference type="EMBL" id="Z83337">
    <property type="protein sequence ID" value="CAB05945.1"/>
    <property type="molecule type" value="Genomic_DNA"/>
</dbReference>
<dbReference type="EMBL" id="AL009126">
    <property type="protein sequence ID" value="CAB15652.1"/>
    <property type="molecule type" value="Genomic_DNA"/>
</dbReference>
<dbReference type="PIR" id="F70065">
    <property type="entry name" value="F70065"/>
</dbReference>
<dbReference type="RefSeq" id="NP_391516.1">
    <property type="nucleotide sequence ID" value="NC_000964.3"/>
</dbReference>
<dbReference type="RefSeq" id="WP_003227787.1">
    <property type="nucleotide sequence ID" value="NZ_OZ025638.1"/>
</dbReference>
<dbReference type="SMR" id="P94586"/>
<dbReference type="FunCoup" id="P94586">
    <property type="interactions" value="83"/>
</dbReference>
<dbReference type="STRING" id="224308.BSU36350"/>
<dbReference type="PaxDb" id="224308-BSU36350"/>
<dbReference type="DNASU" id="936914"/>
<dbReference type="EnsemblBacteria" id="CAB15652">
    <property type="protein sequence ID" value="CAB15652"/>
    <property type="gene ID" value="BSU_36350"/>
</dbReference>
<dbReference type="GeneID" id="936914"/>
<dbReference type="KEGG" id="bsu:BSU36350"/>
<dbReference type="PATRIC" id="fig|224308.179.peg.3935"/>
<dbReference type="eggNOG" id="COG0745">
    <property type="taxonomic scope" value="Bacteria"/>
</dbReference>
<dbReference type="eggNOG" id="COG2972">
    <property type="taxonomic scope" value="Bacteria"/>
</dbReference>
<dbReference type="InParanoid" id="P94586"/>
<dbReference type="OrthoDB" id="9809348at2"/>
<dbReference type="PhylomeDB" id="P94586"/>
<dbReference type="BioCyc" id="BSUB:BSU36350-MONOMER"/>
<dbReference type="Proteomes" id="UP000001570">
    <property type="component" value="Chromosome"/>
</dbReference>
<dbReference type="GO" id="GO:0005886">
    <property type="term" value="C:plasma membrane"/>
    <property type="evidence" value="ECO:0000318"/>
    <property type="project" value="GO_Central"/>
</dbReference>
<dbReference type="GO" id="GO:0000155">
    <property type="term" value="F:phosphorelay sensor kinase activity"/>
    <property type="evidence" value="ECO:0000318"/>
    <property type="project" value="GO_Central"/>
</dbReference>
<dbReference type="GO" id="GO:0007165">
    <property type="term" value="P:signal transduction"/>
    <property type="evidence" value="ECO:0000318"/>
    <property type="project" value="GO_Central"/>
</dbReference>
<dbReference type="CDD" id="cd16955">
    <property type="entry name" value="HATPase_YpdA-like"/>
    <property type="match status" value="1"/>
</dbReference>
<dbReference type="Gene3D" id="3.40.50.2300">
    <property type="match status" value="1"/>
</dbReference>
<dbReference type="Gene3D" id="3.30.565.10">
    <property type="entry name" value="Histidine kinase-like ATPase, C-terminal domain"/>
    <property type="match status" value="1"/>
</dbReference>
<dbReference type="InterPro" id="IPR050640">
    <property type="entry name" value="Bact_2-comp_sensor_kinase"/>
</dbReference>
<dbReference type="InterPro" id="IPR011006">
    <property type="entry name" value="CheY-like_superfamily"/>
</dbReference>
<dbReference type="InterPro" id="IPR036890">
    <property type="entry name" value="HATPase_C_sf"/>
</dbReference>
<dbReference type="InterPro" id="IPR010559">
    <property type="entry name" value="Sig_transdc_His_kin_internal"/>
</dbReference>
<dbReference type="InterPro" id="IPR001789">
    <property type="entry name" value="Sig_transdc_resp-reg_receiver"/>
</dbReference>
<dbReference type="InterPro" id="IPR047965">
    <property type="entry name" value="YpdA-like_HATPase"/>
</dbReference>
<dbReference type="PANTHER" id="PTHR34220">
    <property type="entry name" value="SENSOR HISTIDINE KINASE YPDA"/>
    <property type="match status" value="1"/>
</dbReference>
<dbReference type="PANTHER" id="PTHR34220:SF7">
    <property type="entry name" value="SENSOR HISTIDINE KINASE YPDA"/>
    <property type="match status" value="1"/>
</dbReference>
<dbReference type="Pfam" id="PF02518">
    <property type="entry name" value="HATPase_c"/>
    <property type="match status" value="1"/>
</dbReference>
<dbReference type="Pfam" id="PF06580">
    <property type="entry name" value="His_kinase"/>
    <property type="match status" value="1"/>
</dbReference>
<dbReference type="SMART" id="SM00387">
    <property type="entry name" value="HATPase_c"/>
    <property type="match status" value="1"/>
</dbReference>
<dbReference type="SUPFAM" id="SSF55874">
    <property type="entry name" value="ATPase domain of HSP90 chaperone/DNA topoisomerase II/histidine kinase"/>
    <property type="match status" value="1"/>
</dbReference>
<dbReference type="SUPFAM" id="SSF52172">
    <property type="entry name" value="CheY-like"/>
    <property type="match status" value="1"/>
</dbReference>
<dbReference type="PROSITE" id="PS50110">
    <property type="entry name" value="RESPONSE_REGULATORY"/>
    <property type="match status" value="1"/>
</dbReference>
<gene>
    <name type="primary">ywpD</name>
    <name type="ordered locus">BSU36350</name>
</gene>